<comment type="function">
    <text evidence="1">Binds and transfers iron-sulfur (Fe-S) clusters to target apoproteins. Can hydrolyze ATP.</text>
</comment>
<comment type="subunit">
    <text evidence="1">Homodimer.</text>
</comment>
<comment type="similarity">
    <text evidence="1">Belongs to the Mrp/NBP35 ATP-binding proteins family.</text>
</comment>
<comment type="sequence caution" evidence="2">
    <conflict type="erroneous initiation">
        <sequence resource="EMBL-CDS" id="AAC22925"/>
    </conflict>
</comment>
<sequence>MATYFSDNLTADQQNQVQQIIQQFQHPTLQKDLIVLNTLKKVEKGGDTLRIELQLPFAWNSGAEQLKQAVSDALLKATDCKLIKWAVAYQIATLKRANNQPAVKGVKNIIAVSSGKGGVGKSSVSVNLALALQAQGARVGILDADIYGPSIPHMLGAADQRPTSPDNQHITPIKAHGLSANSIGFLMNEDSATIWRGPMASSALSQLLNETLWDSLDYLVIDMPPGTGDIQLTLSQQIPVTGAVVVTTPQDIALLDAVKGISMFERVSVPVLGIVENMSMHICSECGHHEAIFGTGGAEKMAEKYNVKVLAQLPLHIRIREDLDAGNPTVVRVPENEISQAFLQLAEKVSTELYWQGSVIPSEILFKEVK</sequence>
<feature type="chain" id="PRO_0000184934" description="Iron-sulfur cluster carrier protein">
    <location>
        <begin position="1"/>
        <end position="370"/>
    </location>
</feature>
<feature type="binding site" evidence="1">
    <location>
        <begin position="115"/>
        <end position="122"/>
    </location>
    <ligand>
        <name>ATP</name>
        <dbReference type="ChEBI" id="CHEBI:30616"/>
    </ligand>
</feature>
<evidence type="ECO:0000255" key="1">
    <source>
        <dbReference type="HAMAP-Rule" id="MF_02040"/>
    </source>
</evidence>
<evidence type="ECO:0000305" key="2"/>
<protein>
    <recommendedName>
        <fullName evidence="1">Iron-sulfur cluster carrier protein</fullName>
    </recommendedName>
</protein>
<accession>P45135</accession>
<proteinExistence type="inferred from homology"/>
<gene>
    <name type="primary">mrp</name>
    <name type="ordered locus">HI_1277</name>
</gene>
<keyword id="KW-0067">ATP-binding</keyword>
<keyword id="KW-0378">Hydrolase</keyword>
<keyword id="KW-0408">Iron</keyword>
<keyword id="KW-0411">Iron-sulfur</keyword>
<keyword id="KW-0479">Metal-binding</keyword>
<keyword id="KW-0547">Nucleotide-binding</keyword>
<keyword id="KW-1185">Reference proteome</keyword>
<organism>
    <name type="scientific">Haemophilus influenzae (strain ATCC 51907 / DSM 11121 / KW20 / Rd)</name>
    <dbReference type="NCBI Taxonomy" id="71421"/>
    <lineage>
        <taxon>Bacteria</taxon>
        <taxon>Pseudomonadati</taxon>
        <taxon>Pseudomonadota</taxon>
        <taxon>Gammaproteobacteria</taxon>
        <taxon>Pasteurellales</taxon>
        <taxon>Pasteurellaceae</taxon>
        <taxon>Haemophilus</taxon>
    </lineage>
</organism>
<name>APBC_HAEIN</name>
<reference key="1">
    <citation type="journal article" date="1995" name="Science">
        <title>Whole-genome random sequencing and assembly of Haemophilus influenzae Rd.</title>
        <authorList>
            <person name="Fleischmann R.D."/>
            <person name="Adams M.D."/>
            <person name="White O."/>
            <person name="Clayton R.A."/>
            <person name="Kirkness E.F."/>
            <person name="Kerlavage A.R."/>
            <person name="Bult C.J."/>
            <person name="Tomb J.-F."/>
            <person name="Dougherty B.A."/>
            <person name="Merrick J.M."/>
            <person name="McKenney K."/>
            <person name="Sutton G.G."/>
            <person name="FitzHugh W."/>
            <person name="Fields C.A."/>
            <person name="Gocayne J.D."/>
            <person name="Scott J.D."/>
            <person name="Shirley R."/>
            <person name="Liu L.-I."/>
            <person name="Glodek A."/>
            <person name="Kelley J.M."/>
            <person name="Weidman J.F."/>
            <person name="Phillips C.A."/>
            <person name="Spriggs T."/>
            <person name="Hedblom E."/>
            <person name="Cotton M.D."/>
            <person name="Utterback T.R."/>
            <person name="Hanna M.C."/>
            <person name="Nguyen D.T."/>
            <person name="Saudek D.M."/>
            <person name="Brandon R.C."/>
            <person name="Fine L.D."/>
            <person name="Fritchman J.L."/>
            <person name="Fuhrmann J.L."/>
            <person name="Geoghagen N.S.M."/>
            <person name="Gnehm C.L."/>
            <person name="McDonald L.A."/>
            <person name="Small K.V."/>
            <person name="Fraser C.M."/>
            <person name="Smith H.O."/>
            <person name="Venter J.C."/>
        </authorList>
    </citation>
    <scope>NUCLEOTIDE SEQUENCE [LARGE SCALE GENOMIC DNA]</scope>
    <source>
        <strain>ATCC 51907 / DSM 11121 / KW20 / Rd</strain>
    </source>
</reference>
<dbReference type="EMBL" id="L42023">
    <property type="protein sequence ID" value="AAC22925.1"/>
    <property type="status" value="ALT_INIT"/>
    <property type="molecule type" value="Genomic_DNA"/>
</dbReference>
<dbReference type="PIR" id="A64114">
    <property type="entry name" value="A64114"/>
</dbReference>
<dbReference type="RefSeq" id="NP_439430.2">
    <property type="nucleotide sequence ID" value="NC_000907.1"/>
</dbReference>
<dbReference type="SMR" id="P45135"/>
<dbReference type="STRING" id="71421.HI_1277"/>
<dbReference type="EnsemblBacteria" id="AAC22925">
    <property type="protein sequence ID" value="AAC22925"/>
    <property type="gene ID" value="HI_1277"/>
</dbReference>
<dbReference type="KEGG" id="hin:HI_1277"/>
<dbReference type="PATRIC" id="fig|71421.8.peg.1328"/>
<dbReference type="eggNOG" id="COG0489">
    <property type="taxonomic scope" value="Bacteria"/>
</dbReference>
<dbReference type="HOGENOM" id="CLU_024839_0_0_6"/>
<dbReference type="OrthoDB" id="9809679at2"/>
<dbReference type="PhylomeDB" id="P45135"/>
<dbReference type="BioCyc" id="HINF71421:G1GJ1-1302-MONOMER"/>
<dbReference type="Proteomes" id="UP000000579">
    <property type="component" value="Chromosome"/>
</dbReference>
<dbReference type="GO" id="GO:0005829">
    <property type="term" value="C:cytosol"/>
    <property type="evidence" value="ECO:0000318"/>
    <property type="project" value="GO_Central"/>
</dbReference>
<dbReference type="GO" id="GO:0051539">
    <property type="term" value="F:4 iron, 4 sulfur cluster binding"/>
    <property type="evidence" value="ECO:0000318"/>
    <property type="project" value="GO_Central"/>
</dbReference>
<dbReference type="GO" id="GO:0005524">
    <property type="term" value="F:ATP binding"/>
    <property type="evidence" value="ECO:0007669"/>
    <property type="project" value="UniProtKB-UniRule"/>
</dbReference>
<dbReference type="GO" id="GO:0016887">
    <property type="term" value="F:ATP hydrolysis activity"/>
    <property type="evidence" value="ECO:0007669"/>
    <property type="project" value="UniProtKB-UniRule"/>
</dbReference>
<dbReference type="GO" id="GO:0140663">
    <property type="term" value="F:ATP-dependent FeS chaperone activity"/>
    <property type="evidence" value="ECO:0007669"/>
    <property type="project" value="InterPro"/>
</dbReference>
<dbReference type="GO" id="GO:0046872">
    <property type="term" value="F:metal ion binding"/>
    <property type="evidence" value="ECO:0007669"/>
    <property type="project" value="UniProtKB-KW"/>
</dbReference>
<dbReference type="GO" id="GO:0016226">
    <property type="term" value="P:iron-sulfur cluster assembly"/>
    <property type="evidence" value="ECO:0000318"/>
    <property type="project" value="GO_Central"/>
</dbReference>
<dbReference type="CDD" id="cd02037">
    <property type="entry name" value="Mrp_NBP35"/>
    <property type="match status" value="1"/>
</dbReference>
<dbReference type="FunFam" id="3.40.50.300:FF:000418">
    <property type="entry name" value="Iron-sulfur cluster carrier protein"/>
    <property type="match status" value="1"/>
</dbReference>
<dbReference type="Gene3D" id="3.40.50.300">
    <property type="entry name" value="P-loop containing nucleotide triphosphate hydrolases"/>
    <property type="match status" value="1"/>
</dbReference>
<dbReference type="HAMAP" id="MF_02040">
    <property type="entry name" value="Mrp_NBP35"/>
    <property type="match status" value="1"/>
</dbReference>
<dbReference type="InterPro" id="IPR034904">
    <property type="entry name" value="FSCA_dom_sf"/>
</dbReference>
<dbReference type="InterPro" id="IPR000808">
    <property type="entry name" value="Mrp-like_CS"/>
</dbReference>
<dbReference type="InterPro" id="IPR019591">
    <property type="entry name" value="Mrp/NBP35_ATP-bd"/>
</dbReference>
<dbReference type="InterPro" id="IPR044304">
    <property type="entry name" value="NUBPL-like"/>
</dbReference>
<dbReference type="InterPro" id="IPR027417">
    <property type="entry name" value="P-loop_NTPase"/>
</dbReference>
<dbReference type="InterPro" id="IPR033756">
    <property type="entry name" value="YlxH/NBP35"/>
</dbReference>
<dbReference type="NCBIfam" id="NF008669">
    <property type="entry name" value="PRK11670.1"/>
    <property type="match status" value="1"/>
</dbReference>
<dbReference type="PANTHER" id="PTHR42961">
    <property type="entry name" value="IRON-SULFUR PROTEIN NUBPL"/>
    <property type="match status" value="1"/>
</dbReference>
<dbReference type="PANTHER" id="PTHR42961:SF2">
    <property type="entry name" value="IRON-SULFUR PROTEIN NUBPL"/>
    <property type="match status" value="1"/>
</dbReference>
<dbReference type="Pfam" id="PF10609">
    <property type="entry name" value="ParA"/>
    <property type="match status" value="1"/>
</dbReference>
<dbReference type="SUPFAM" id="SSF117916">
    <property type="entry name" value="Fe-S cluster assembly (FSCA) domain-like"/>
    <property type="match status" value="1"/>
</dbReference>
<dbReference type="SUPFAM" id="SSF52540">
    <property type="entry name" value="P-loop containing nucleoside triphosphate hydrolases"/>
    <property type="match status" value="1"/>
</dbReference>
<dbReference type="PROSITE" id="PS01215">
    <property type="entry name" value="MRP"/>
    <property type="match status" value="1"/>
</dbReference>